<name>SED5_SCHPO</name>
<protein>
    <recommendedName>
        <fullName>Integral membrane protein sed5</fullName>
    </recommendedName>
</protein>
<organism>
    <name type="scientific">Schizosaccharomyces pombe (strain 972 / ATCC 24843)</name>
    <name type="common">Fission yeast</name>
    <dbReference type="NCBI Taxonomy" id="284812"/>
    <lineage>
        <taxon>Eukaryota</taxon>
        <taxon>Fungi</taxon>
        <taxon>Dikarya</taxon>
        <taxon>Ascomycota</taxon>
        <taxon>Taphrinomycotina</taxon>
        <taxon>Schizosaccharomycetes</taxon>
        <taxon>Schizosaccharomycetales</taxon>
        <taxon>Schizosaccharomycetaceae</taxon>
        <taxon>Schizosaccharomyces</taxon>
    </lineage>
</organism>
<sequence>MSFQDRTAEFQACVTKTRSRLRTTTANQAVGGPDQTKHQKSEFTRIAQKIANQINQTGEKLQKLSQLAKRKTLFDDRPVEIQELTFQIKQSLSSLNSDIASLQQVVKGNRNKPAQMNQHSENVVVSLQNSLANTSMTFKDILEIRTQNMKASQNRTEKFVASSSMNANPLINSGNSISPFADYNDPKPEANEDYLSLNLGDGANTRYEQMALLESQTDTYSQQRMSSIQNIESTITELGGIFSQLAQMVSEQRETVQRIDMHTDDIVSNIGSAQREIVKFYERMSSNRALLFKIFGIVIIFFLLWVLVT</sequence>
<evidence type="ECO:0000250" key="1"/>
<evidence type="ECO:0000255" key="2"/>
<evidence type="ECO:0000255" key="3">
    <source>
        <dbReference type="PROSITE-ProRule" id="PRU00202"/>
    </source>
</evidence>
<evidence type="ECO:0000305" key="4"/>
<proteinExistence type="inferred from homology"/>
<dbReference type="EMBL" id="AB004538">
    <property type="protein sequence ID" value="BAA21432.1"/>
    <property type="molecule type" value="Genomic_DNA"/>
</dbReference>
<dbReference type="EMBL" id="CU329671">
    <property type="protein sequence ID" value="CAA17829.1"/>
    <property type="molecule type" value="Genomic_DNA"/>
</dbReference>
<dbReference type="PIR" id="T40759">
    <property type="entry name" value="T40759"/>
</dbReference>
<dbReference type="RefSeq" id="NP_595576.1">
    <property type="nucleotide sequence ID" value="NM_001021471.2"/>
</dbReference>
<dbReference type="SMR" id="O13644"/>
<dbReference type="BioGRID" id="277777">
    <property type="interactions" value="1"/>
</dbReference>
<dbReference type="FunCoup" id="O13644">
    <property type="interactions" value="629"/>
</dbReference>
<dbReference type="STRING" id="284812.O13644"/>
<dbReference type="PaxDb" id="4896-SPBC8D2.14c.1"/>
<dbReference type="EnsemblFungi" id="SPBC8D2.14c.1">
    <property type="protein sequence ID" value="SPBC8D2.14c.1:pep"/>
    <property type="gene ID" value="SPBC8D2.14c"/>
</dbReference>
<dbReference type="GeneID" id="2541263"/>
<dbReference type="KEGG" id="spo:2541263"/>
<dbReference type="PomBase" id="SPBC8D2.14c">
    <property type="gene designation" value="sed5"/>
</dbReference>
<dbReference type="VEuPathDB" id="FungiDB:SPBC8D2.14c"/>
<dbReference type="eggNOG" id="KOG0812">
    <property type="taxonomic scope" value="Eukaryota"/>
</dbReference>
<dbReference type="HOGENOM" id="CLU_044998_0_1_1"/>
<dbReference type="InParanoid" id="O13644"/>
<dbReference type="OMA" id="EHNHNVV"/>
<dbReference type="PhylomeDB" id="O13644"/>
<dbReference type="Reactome" id="R-SPO-204005">
    <property type="pathway name" value="COPII-mediated vesicle transport"/>
</dbReference>
<dbReference type="Reactome" id="R-SPO-5694530">
    <property type="pathway name" value="Cargo concentration in the ER"/>
</dbReference>
<dbReference type="Reactome" id="R-SPO-6807878">
    <property type="pathway name" value="COPI-mediated anterograde transport"/>
</dbReference>
<dbReference type="Reactome" id="R-SPO-6811438">
    <property type="pathway name" value="Intra-Golgi traffic"/>
</dbReference>
<dbReference type="Reactome" id="R-SPO-9013106">
    <property type="pathway name" value="RHOC GTPase cycle"/>
</dbReference>
<dbReference type="Reactome" id="R-SPO-9609523">
    <property type="pathway name" value="Insertion of tail-anchored proteins into the endoplasmic reticulum membrane"/>
</dbReference>
<dbReference type="PRO" id="PR:O13644"/>
<dbReference type="Proteomes" id="UP000002485">
    <property type="component" value="Chromosome II"/>
</dbReference>
<dbReference type="GO" id="GO:0005801">
    <property type="term" value="C:cis-Golgi network"/>
    <property type="evidence" value="ECO:0000250"/>
    <property type="project" value="PomBase"/>
</dbReference>
<dbReference type="GO" id="GO:0012505">
    <property type="term" value="C:endomembrane system"/>
    <property type="evidence" value="ECO:0000318"/>
    <property type="project" value="GO_Central"/>
</dbReference>
<dbReference type="GO" id="GO:0000139">
    <property type="term" value="C:Golgi membrane"/>
    <property type="evidence" value="ECO:0000318"/>
    <property type="project" value="GO_Central"/>
</dbReference>
<dbReference type="GO" id="GO:0031201">
    <property type="term" value="C:SNARE complex"/>
    <property type="evidence" value="ECO:0000318"/>
    <property type="project" value="GO_Central"/>
</dbReference>
<dbReference type="GO" id="GO:0005484">
    <property type="term" value="F:SNAP receptor activity"/>
    <property type="evidence" value="ECO:0000318"/>
    <property type="project" value="GO_Central"/>
</dbReference>
<dbReference type="GO" id="GO:0000149">
    <property type="term" value="F:SNARE binding"/>
    <property type="evidence" value="ECO:0000318"/>
    <property type="project" value="GO_Central"/>
</dbReference>
<dbReference type="GO" id="GO:0006888">
    <property type="term" value="P:endoplasmic reticulum to Golgi vesicle-mediated transport"/>
    <property type="evidence" value="ECO:0000318"/>
    <property type="project" value="GO_Central"/>
</dbReference>
<dbReference type="GO" id="GO:0006886">
    <property type="term" value="P:intracellular protein transport"/>
    <property type="evidence" value="ECO:0000318"/>
    <property type="project" value="GO_Central"/>
</dbReference>
<dbReference type="GO" id="GO:0048278">
    <property type="term" value="P:vesicle docking"/>
    <property type="evidence" value="ECO:0000318"/>
    <property type="project" value="GO_Central"/>
</dbReference>
<dbReference type="GO" id="GO:0006906">
    <property type="term" value="P:vesicle fusion"/>
    <property type="evidence" value="ECO:0000318"/>
    <property type="project" value="GO_Central"/>
</dbReference>
<dbReference type="CDD" id="cd15844">
    <property type="entry name" value="SNARE_syntaxin5"/>
    <property type="match status" value="1"/>
</dbReference>
<dbReference type="Gene3D" id="1.20.58.70">
    <property type="match status" value="1"/>
</dbReference>
<dbReference type="InterPro" id="IPR010989">
    <property type="entry name" value="SNARE"/>
</dbReference>
<dbReference type="InterPro" id="IPR045242">
    <property type="entry name" value="Syntaxin"/>
</dbReference>
<dbReference type="InterPro" id="IPR021538">
    <property type="entry name" value="Syntaxin-5_N"/>
</dbReference>
<dbReference type="InterPro" id="IPR000727">
    <property type="entry name" value="T_SNARE_dom"/>
</dbReference>
<dbReference type="PANTHER" id="PTHR19957">
    <property type="entry name" value="SYNTAXIN"/>
    <property type="match status" value="1"/>
</dbReference>
<dbReference type="PANTHER" id="PTHR19957:SF3">
    <property type="entry name" value="SYNTAXIN-5"/>
    <property type="match status" value="1"/>
</dbReference>
<dbReference type="Pfam" id="PF05739">
    <property type="entry name" value="SNARE"/>
    <property type="match status" value="1"/>
</dbReference>
<dbReference type="Pfam" id="PF11416">
    <property type="entry name" value="Syntaxin-5_N"/>
    <property type="match status" value="1"/>
</dbReference>
<dbReference type="SMART" id="SM00397">
    <property type="entry name" value="t_SNARE"/>
    <property type="match status" value="1"/>
</dbReference>
<dbReference type="SUPFAM" id="SSF47661">
    <property type="entry name" value="t-snare proteins"/>
    <property type="match status" value="1"/>
</dbReference>
<dbReference type="PROSITE" id="PS50192">
    <property type="entry name" value="T_SNARE"/>
    <property type="match status" value="1"/>
</dbReference>
<keyword id="KW-0175">Coiled coil</keyword>
<keyword id="KW-0333">Golgi apparatus</keyword>
<keyword id="KW-0472">Membrane</keyword>
<keyword id="KW-0653">Protein transport</keyword>
<keyword id="KW-1185">Reference proteome</keyword>
<keyword id="KW-0812">Transmembrane</keyword>
<keyword id="KW-1133">Transmembrane helix</keyword>
<keyword id="KW-0813">Transport</keyword>
<comment type="function">
    <text evidence="1">Required for vesicular transport between the endoplasmic reticulum and the Golgi complex. Acts as a target organelle soluble NSF attachment protein receptor (t-SNARE) (By similarity).</text>
</comment>
<comment type="subcellular location">
    <subcellularLocation>
        <location evidence="4">Membrane</location>
        <topology evidence="4">Single-pass type IV membrane protein</topology>
    </subcellularLocation>
    <subcellularLocation>
        <location evidence="4">Golgi apparatus membrane</location>
        <topology evidence="4">Single-pass type IV membrane protein</topology>
    </subcellularLocation>
</comment>
<comment type="similarity">
    <text evidence="4">Belongs to the syntaxin family.</text>
</comment>
<feature type="chain" id="PRO_0000210272" description="Integral membrane protein sed5">
    <location>
        <begin position="1"/>
        <end position="309"/>
    </location>
</feature>
<feature type="topological domain" description="Cytoplasmic" evidence="2">
    <location>
        <begin position="1"/>
        <end position="288"/>
    </location>
</feature>
<feature type="transmembrane region" description="Helical; Anchor for type IV membrane protein" evidence="2">
    <location>
        <begin position="289"/>
        <end position="308"/>
    </location>
</feature>
<feature type="topological domain" description="Vesicular" evidence="2">
    <location>
        <position position="309"/>
    </location>
</feature>
<feature type="domain" description="t-SNARE coiled-coil homology" evidence="3">
    <location>
        <begin position="218"/>
        <end position="280"/>
    </location>
</feature>
<feature type="coiled-coil region" evidence="2">
    <location>
        <begin position="37"/>
        <end position="66"/>
    </location>
</feature>
<accession>O13644</accession>
<gene>
    <name type="primary">sed5</name>
    <name type="ORF">pi051</name>
    <name type="ORF">SPBC8D2.14c</name>
</gene>
<reference key="1">
    <citation type="journal article" date="2000" name="Yeast">
        <title>A 38 kb segment containing the cdc2 gene from the left arm of fission yeast chromosome II: sequence analysis and characterization of the genomic DNA and cDNAs encoded on the segment.</title>
        <authorList>
            <person name="Machida M."/>
            <person name="Yamazaki S."/>
            <person name="Kunihiro S."/>
            <person name="Tanaka T."/>
            <person name="Kushida N."/>
            <person name="Jinno K."/>
            <person name="Haikawa Y."/>
            <person name="Yamazaki J."/>
            <person name="Yamamoto S."/>
            <person name="Sekine M."/>
            <person name="Oguchi A."/>
            <person name="Nagai Y."/>
            <person name="Sakai M."/>
            <person name="Aoki K."/>
            <person name="Ogura K."/>
            <person name="Kudoh Y."/>
            <person name="Kikuchi H."/>
            <person name="Zhang M.Q."/>
            <person name="Yanagida M."/>
        </authorList>
    </citation>
    <scope>NUCLEOTIDE SEQUENCE [LARGE SCALE GENOMIC DNA]</scope>
    <source>
        <strain>972 / ATCC 24843</strain>
    </source>
</reference>
<reference key="2">
    <citation type="journal article" date="2002" name="Nature">
        <title>The genome sequence of Schizosaccharomyces pombe.</title>
        <authorList>
            <person name="Wood V."/>
            <person name="Gwilliam R."/>
            <person name="Rajandream M.A."/>
            <person name="Lyne M.H."/>
            <person name="Lyne R."/>
            <person name="Stewart A."/>
            <person name="Sgouros J.G."/>
            <person name="Peat N."/>
            <person name="Hayles J."/>
            <person name="Baker S.G."/>
            <person name="Basham D."/>
            <person name="Bowman S."/>
            <person name="Brooks K."/>
            <person name="Brown D."/>
            <person name="Brown S."/>
            <person name="Chillingworth T."/>
            <person name="Churcher C.M."/>
            <person name="Collins M."/>
            <person name="Connor R."/>
            <person name="Cronin A."/>
            <person name="Davis P."/>
            <person name="Feltwell T."/>
            <person name="Fraser A."/>
            <person name="Gentles S."/>
            <person name="Goble A."/>
            <person name="Hamlin N."/>
            <person name="Harris D.E."/>
            <person name="Hidalgo J."/>
            <person name="Hodgson G."/>
            <person name="Holroyd S."/>
            <person name="Hornsby T."/>
            <person name="Howarth S."/>
            <person name="Huckle E.J."/>
            <person name="Hunt S."/>
            <person name="Jagels K."/>
            <person name="James K.D."/>
            <person name="Jones L."/>
            <person name="Jones M."/>
            <person name="Leather S."/>
            <person name="McDonald S."/>
            <person name="McLean J."/>
            <person name="Mooney P."/>
            <person name="Moule S."/>
            <person name="Mungall K.L."/>
            <person name="Murphy L.D."/>
            <person name="Niblett D."/>
            <person name="Odell C."/>
            <person name="Oliver K."/>
            <person name="O'Neil S."/>
            <person name="Pearson D."/>
            <person name="Quail M.A."/>
            <person name="Rabbinowitsch E."/>
            <person name="Rutherford K.M."/>
            <person name="Rutter S."/>
            <person name="Saunders D."/>
            <person name="Seeger K."/>
            <person name="Sharp S."/>
            <person name="Skelton J."/>
            <person name="Simmonds M.N."/>
            <person name="Squares R."/>
            <person name="Squares S."/>
            <person name="Stevens K."/>
            <person name="Taylor K."/>
            <person name="Taylor R.G."/>
            <person name="Tivey A."/>
            <person name="Walsh S.V."/>
            <person name="Warren T."/>
            <person name="Whitehead S."/>
            <person name="Woodward J.R."/>
            <person name="Volckaert G."/>
            <person name="Aert R."/>
            <person name="Robben J."/>
            <person name="Grymonprez B."/>
            <person name="Weltjens I."/>
            <person name="Vanstreels E."/>
            <person name="Rieger M."/>
            <person name="Schaefer M."/>
            <person name="Mueller-Auer S."/>
            <person name="Gabel C."/>
            <person name="Fuchs M."/>
            <person name="Duesterhoeft A."/>
            <person name="Fritzc C."/>
            <person name="Holzer E."/>
            <person name="Moestl D."/>
            <person name="Hilbert H."/>
            <person name="Borzym K."/>
            <person name="Langer I."/>
            <person name="Beck A."/>
            <person name="Lehrach H."/>
            <person name="Reinhardt R."/>
            <person name="Pohl T.M."/>
            <person name="Eger P."/>
            <person name="Zimmermann W."/>
            <person name="Wedler H."/>
            <person name="Wambutt R."/>
            <person name="Purnelle B."/>
            <person name="Goffeau A."/>
            <person name="Cadieu E."/>
            <person name="Dreano S."/>
            <person name="Gloux S."/>
            <person name="Lelaure V."/>
            <person name="Mottier S."/>
            <person name="Galibert F."/>
            <person name="Aves S.J."/>
            <person name="Xiang Z."/>
            <person name="Hunt C."/>
            <person name="Moore K."/>
            <person name="Hurst S.M."/>
            <person name="Lucas M."/>
            <person name="Rochet M."/>
            <person name="Gaillardin C."/>
            <person name="Tallada V.A."/>
            <person name="Garzon A."/>
            <person name="Thode G."/>
            <person name="Daga R.R."/>
            <person name="Cruzado L."/>
            <person name="Jimenez J."/>
            <person name="Sanchez M."/>
            <person name="del Rey F."/>
            <person name="Benito J."/>
            <person name="Dominguez A."/>
            <person name="Revuelta J.L."/>
            <person name="Moreno S."/>
            <person name="Armstrong J."/>
            <person name="Forsburg S.L."/>
            <person name="Cerutti L."/>
            <person name="Lowe T."/>
            <person name="McCombie W.R."/>
            <person name="Paulsen I."/>
            <person name="Potashkin J."/>
            <person name="Shpakovski G.V."/>
            <person name="Ussery D."/>
            <person name="Barrell B.G."/>
            <person name="Nurse P."/>
        </authorList>
    </citation>
    <scope>NUCLEOTIDE SEQUENCE [LARGE SCALE GENOMIC DNA]</scope>
    <source>
        <strain>972 / ATCC 24843</strain>
    </source>
</reference>